<keyword id="KW-1185">Reference proteome</keyword>
<keyword id="KW-0687">Ribonucleoprotein</keyword>
<keyword id="KW-0689">Ribosomal protein</keyword>
<keyword id="KW-0694">RNA-binding</keyword>
<keyword id="KW-0699">rRNA-binding</keyword>
<reference key="1">
    <citation type="journal article" date="2006" name="Nat. Biotechnol.">
        <title>Genome sequence of the ubiquitous hydrocarbon-degrading marine bacterium Alcanivorax borkumensis.</title>
        <authorList>
            <person name="Schneiker S."/>
            <person name="Martins dos Santos V.A.P."/>
            <person name="Bartels D."/>
            <person name="Bekel T."/>
            <person name="Brecht M."/>
            <person name="Buhrmester J."/>
            <person name="Chernikova T.N."/>
            <person name="Denaro R."/>
            <person name="Ferrer M."/>
            <person name="Gertler C."/>
            <person name="Goesmann A."/>
            <person name="Golyshina O.V."/>
            <person name="Kaminski F."/>
            <person name="Khachane A.N."/>
            <person name="Lang S."/>
            <person name="Linke B."/>
            <person name="McHardy A.C."/>
            <person name="Meyer F."/>
            <person name="Nechitaylo T."/>
            <person name="Puehler A."/>
            <person name="Regenhardt D."/>
            <person name="Rupp O."/>
            <person name="Sabirova J.S."/>
            <person name="Selbitschka W."/>
            <person name="Yakimov M.M."/>
            <person name="Timmis K.N."/>
            <person name="Vorhoelter F.-J."/>
            <person name="Weidner S."/>
            <person name="Kaiser O."/>
            <person name="Golyshin P.N."/>
        </authorList>
    </citation>
    <scope>NUCLEOTIDE SEQUENCE [LARGE SCALE GENOMIC DNA]</scope>
    <source>
        <strain>ATCC 700651 / DSM 11573 / NCIMB 13689 / SK2</strain>
    </source>
</reference>
<accession>Q0VSK0</accession>
<gene>
    <name evidence="1" type="primary">rplB</name>
    <name type="ordered locus">ABO_0400</name>
</gene>
<sequence length="274" mass="30057">MAIVKCKPTSPGRRFVVKVVNEDLHKGAPYAPLLEAKAKNGGRNNNGRITTRHKGGGHKQKYRVIDFRRNKDGIAGVVERLEYDPNRTAHIALVKYLDGERRYILAPKGLKAEDRIQSGEDAPIKLGNALPLRNIPLGSTIHNVEMKPGKGGQIARSAGTSVQLLAKDGQYVTLRLRSGEMRKVHADCKATIGEVSNSEHSLRSLGKAGAKRWRGVRPTVRGAAMNPVDHPHGGGEGRSSGGRHPVTPWGVPTKGYKTRTNKRTTKMIVRDRRK</sequence>
<name>RL2_ALCBS</name>
<dbReference type="EMBL" id="AM286690">
    <property type="protein sequence ID" value="CAL15848.1"/>
    <property type="molecule type" value="Genomic_DNA"/>
</dbReference>
<dbReference type="RefSeq" id="WP_011587693.1">
    <property type="nucleotide sequence ID" value="NC_008260.1"/>
</dbReference>
<dbReference type="SMR" id="Q0VSK0"/>
<dbReference type="STRING" id="393595.ABO_0400"/>
<dbReference type="KEGG" id="abo:ABO_0400"/>
<dbReference type="eggNOG" id="COG0090">
    <property type="taxonomic scope" value="Bacteria"/>
</dbReference>
<dbReference type="HOGENOM" id="CLU_036235_2_1_6"/>
<dbReference type="OrthoDB" id="9778722at2"/>
<dbReference type="Proteomes" id="UP000008871">
    <property type="component" value="Chromosome"/>
</dbReference>
<dbReference type="GO" id="GO:0015934">
    <property type="term" value="C:large ribosomal subunit"/>
    <property type="evidence" value="ECO:0007669"/>
    <property type="project" value="InterPro"/>
</dbReference>
<dbReference type="GO" id="GO:0019843">
    <property type="term" value="F:rRNA binding"/>
    <property type="evidence" value="ECO:0007669"/>
    <property type="project" value="UniProtKB-UniRule"/>
</dbReference>
<dbReference type="GO" id="GO:0003735">
    <property type="term" value="F:structural constituent of ribosome"/>
    <property type="evidence" value="ECO:0007669"/>
    <property type="project" value="InterPro"/>
</dbReference>
<dbReference type="GO" id="GO:0016740">
    <property type="term" value="F:transferase activity"/>
    <property type="evidence" value="ECO:0007669"/>
    <property type="project" value="InterPro"/>
</dbReference>
<dbReference type="GO" id="GO:0002181">
    <property type="term" value="P:cytoplasmic translation"/>
    <property type="evidence" value="ECO:0007669"/>
    <property type="project" value="TreeGrafter"/>
</dbReference>
<dbReference type="FunFam" id="2.30.30.30:FF:000001">
    <property type="entry name" value="50S ribosomal protein L2"/>
    <property type="match status" value="1"/>
</dbReference>
<dbReference type="FunFam" id="2.40.50.140:FF:000003">
    <property type="entry name" value="50S ribosomal protein L2"/>
    <property type="match status" value="1"/>
</dbReference>
<dbReference type="FunFam" id="4.10.950.10:FF:000001">
    <property type="entry name" value="50S ribosomal protein L2"/>
    <property type="match status" value="1"/>
</dbReference>
<dbReference type="Gene3D" id="2.30.30.30">
    <property type="match status" value="1"/>
</dbReference>
<dbReference type="Gene3D" id="2.40.50.140">
    <property type="entry name" value="Nucleic acid-binding proteins"/>
    <property type="match status" value="1"/>
</dbReference>
<dbReference type="Gene3D" id="4.10.950.10">
    <property type="entry name" value="Ribosomal protein L2, domain 3"/>
    <property type="match status" value="1"/>
</dbReference>
<dbReference type="HAMAP" id="MF_01320_B">
    <property type="entry name" value="Ribosomal_uL2_B"/>
    <property type="match status" value="1"/>
</dbReference>
<dbReference type="InterPro" id="IPR012340">
    <property type="entry name" value="NA-bd_OB-fold"/>
</dbReference>
<dbReference type="InterPro" id="IPR014722">
    <property type="entry name" value="Rib_uL2_dom2"/>
</dbReference>
<dbReference type="InterPro" id="IPR002171">
    <property type="entry name" value="Ribosomal_uL2"/>
</dbReference>
<dbReference type="InterPro" id="IPR005880">
    <property type="entry name" value="Ribosomal_uL2_bac/org-type"/>
</dbReference>
<dbReference type="InterPro" id="IPR022669">
    <property type="entry name" value="Ribosomal_uL2_C"/>
</dbReference>
<dbReference type="InterPro" id="IPR022671">
    <property type="entry name" value="Ribosomal_uL2_CS"/>
</dbReference>
<dbReference type="InterPro" id="IPR014726">
    <property type="entry name" value="Ribosomal_uL2_dom3"/>
</dbReference>
<dbReference type="InterPro" id="IPR022666">
    <property type="entry name" value="Ribosomal_uL2_RNA-bd_dom"/>
</dbReference>
<dbReference type="InterPro" id="IPR008991">
    <property type="entry name" value="Translation_prot_SH3-like_sf"/>
</dbReference>
<dbReference type="NCBIfam" id="TIGR01171">
    <property type="entry name" value="rplB_bact"/>
    <property type="match status" value="1"/>
</dbReference>
<dbReference type="PANTHER" id="PTHR13691:SF5">
    <property type="entry name" value="LARGE RIBOSOMAL SUBUNIT PROTEIN UL2M"/>
    <property type="match status" value="1"/>
</dbReference>
<dbReference type="PANTHER" id="PTHR13691">
    <property type="entry name" value="RIBOSOMAL PROTEIN L2"/>
    <property type="match status" value="1"/>
</dbReference>
<dbReference type="Pfam" id="PF00181">
    <property type="entry name" value="Ribosomal_L2"/>
    <property type="match status" value="1"/>
</dbReference>
<dbReference type="Pfam" id="PF03947">
    <property type="entry name" value="Ribosomal_L2_C"/>
    <property type="match status" value="1"/>
</dbReference>
<dbReference type="PIRSF" id="PIRSF002158">
    <property type="entry name" value="Ribosomal_L2"/>
    <property type="match status" value="1"/>
</dbReference>
<dbReference type="SMART" id="SM01383">
    <property type="entry name" value="Ribosomal_L2"/>
    <property type="match status" value="1"/>
</dbReference>
<dbReference type="SMART" id="SM01382">
    <property type="entry name" value="Ribosomal_L2_C"/>
    <property type="match status" value="1"/>
</dbReference>
<dbReference type="SUPFAM" id="SSF50249">
    <property type="entry name" value="Nucleic acid-binding proteins"/>
    <property type="match status" value="1"/>
</dbReference>
<dbReference type="SUPFAM" id="SSF50104">
    <property type="entry name" value="Translation proteins SH3-like domain"/>
    <property type="match status" value="1"/>
</dbReference>
<dbReference type="PROSITE" id="PS00467">
    <property type="entry name" value="RIBOSOMAL_L2"/>
    <property type="match status" value="1"/>
</dbReference>
<organism>
    <name type="scientific">Alcanivorax borkumensis (strain ATCC 700651 / DSM 11573 / NCIMB 13689 / SK2)</name>
    <dbReference type="NCBI Taxonomy" id="393595"/>
    <lineage>
        <taxon>Bacteria</taxon>
        <taxon>Pseudomonadati</taxon>
        <taxon>Pseudomonadota</taxon>
        <taxon>Gammaproteobacteria</taxon>
        <taxon>Oceanospirillales</taxon>
        <taxon>Alcanivoracaceae</taxon>
        <taxon>Alcanivorax</taxon>
    </lineage>
</organism>
<comment type="function">
    <text evidence="1">One of the primary rRNA binding proteins. Required for association of the 30S and 50S subunits to form the 70S ribosome, for tRNA binding and peptide bond formation. It has been suggested to have peptidyltransferase activity; this is somewhat controversial. Makes several contacts with the 16S rRNA in the 70S ribosome.</text>
</comment>
<comment type="subunit">
    <text evidence="1">Part of the 50S ribosomal subunit. Forms a bridge to the 30S subunit in the 70S ribosome.</text>
</comment>
<comment type="similarity">
    <text evidence="1">Belongs to the universal ribosomal protein uL2 family.</text>
</comment>
<evidence type="ECO:0000255" key="1">
    <source>
        <dbReference type="HAMAP-Rule" id="MF_01320"/>
    </source>
</evidence>
<evidence type="ECO:0000256" key="2">
    <source>
        <dbReference type="SAM" id="MobiDB-lite"/>
    </source>
</evidence>
<evidence type="ECO:0000305" key="3"/>
<feature type="chain" id="PRO_0000309865" description="Large ribosomal subunit protein uL2">
    <location>
        <begin position="1"/>
        <end position="274"/>
    </location>
</feature>
<feature type="region of interest" description="Disordered" evidence="2">
    <location>
        <begin position="37"/>
        <end position="59"/>
    </location>
</feature>
<feature type="region of interest" description="Disordered" evidence="2">
    <location>
        <begin position="222"/>
        <end position="262"/>
    </location>
</feature>
<feature type="compositionally biased region" description="Basic residues" evidence="2">
    <location>
        <begin position="50"/>
        <end position="59"/>
    </location>
</feature>
<proteinExistence type="inferred from homology"/>
<protein>
    <recommendedName>
        <fullName evidence="1">Large ribosomal subunit protein uL2</fullName>
    </recommendedName>
    <alternativeName>
        <fullName evidence="3">50S ribosomal protein L2</fullName>
    </alternativeName>
</protein>